<sequence length="378" mass="42434">MSLSIADQNKLDAFWSYCVKNRYFNIGYPESADFDYTMLERFLRFSINNCGDWGEYCNYLLNSFDFEKEVMEYFSGIFKIPFAESWGYVTNGGTESNMFGCYLGRELFPEGTLYYSKDTHYSVAKIVKLLRIKSQLVESQPDGEMDYDDLINKIRTSGERHPIIFANIGTTVRGAVDNIAEIQKRIAALGIPREDYYLHADAALSGMILPFVEDPQPFTFADGIDSIGVSGHKMIGSPIPCGIVVAKKANVDRISVEIDYISAHDKTISGSRNGHTPLMMWAAVRSHTDAEWHRRIGHSLNMAKYAVDRFKAAGIDALCHKNSITVVFPKPSEWVWKKHCLATSGNVAHLITTAHHLDSSRIDALIDDVIADLAQRAA</sequence>
<evidence type="ECO:0000250" key="1"/>
<evidence type="ECO:0000305" key="2"/>
<accession>P28577</accession>
<dbReference type="EC" id="4.1.1.22"/>
<dbReference type="EMBL" id="M62745">
    <property type="protein sequence ID" value="AAA24802.1"/>
    <property type="molecule type" value="Genomic_DNA"/>
</dbReference>
<dbReference type="PIR" id="A40004">
    <property type="entry name" value="A40004"/>
</dbReference>
<dbReference type="RefSeq" id="WP_015369839.1">
    <property type="nucleotide sequence ID" value="NZ_WPHE01000003.1"/>
</dbReference>
<dbReference type="SMR" id="P28577"/>
<dbReference type="STRING" id="548.EAG7_04977"/>
<dbReference type="OMA" id="DPHKMGL"/>
<dbReference type="BioCyc" id="MetaCyc:MONOMER-14638"/>
<dbReference type="BRENDA" id="4.1.1.22">
    <property type="organism ID" value="152"/>
</dbReference>
<dbReference type="GO" id="GO:0004398">
    <property type="term" value="F:histidine decarboxylase activity"/>
    <property type="evidence" value="ECO:0007669"/>
    <property type="project" value="UniProtKB-UniRule"/>
</dbReference>
<dbReference type="GO" id="GO:0030170">
    <property type="term" value="F:pyridoxal phosphate binding"/>
    <property type="evidence" value="ECO:0007669"/>
    <property type="project" value="InterPro"/>
</dbReference>
<dbReference type="GO" id="GO:0019752">
    <property type="term" value="P:carboxylic acid metabolic process"/>
    <property type="evidence" value="ECO:0007669"/>
    <property type="project" value="InterPro"/>
</dbReference>
<dbReference type="Gene3D" id="3.40.640.10">
    <property type="entry name" value="Type I PLP-dependent aspartate aminotransferase-like (Major domain)"/>
    <property type="match status" value="1"/>
</dbReference>
<dbReference type="HAMAP" id="MF_00609">
    <property type="entry name" value="Pyridoxal_decarbox"/>
    <property type="match status" value="1"/>
</dbReference>
<dbReference type="InterPro" id="IPR051151">
    <property type="entry name" value="Group_II_Decarboxylase"/>
</dbReference>
<dbReference type="InterPro" id="IPR023523">
    <property type="entry name" value="Hist_deCOase_bac"/>
</dbReference>
<dbReference type="InterPro" id="IPR002129">
    <property type="entry name" value="PyrdxlP-dep_de-COase"/>
</dbReference>
<dbReference type="InterPro" id="IPR015424">
    <property type="entry name" value="PyrdxlP-dep_Trfase"/>
</dbReference>
<dbReference type="InterPro" id="IPR015421">
    <property type="entry name" value="PyrdxlP-dep_Trfase_major"/>
</dbReference>
<dbReference type="InterPro" id="IPR021115">
    <property type="entry name" value="Pyridoxal-P_BS"/>
</dbReference>
<dbReference type="NCBIfam" id="NF002748">
    <property type="entry name" value="PRK02769.1"/>
    <property type="match status" value="1"/>
</dbReference>
<dbReference type="PANTHER" id="PTHR46101">
    <property type="match status" value="1"/>
</dbReference>
<dbReference type="PANTHER" id="PTHR46101:SF2">
    <property type="entry name" value="SERINE DECARBOXYLASE"/>
    <property type="match status" value="1"/>
</dbReference>
<dbReference type="Pfam" id="PF00282">
    <property type="entry name" value="Pyridoxal_deC"/>
    <property type="match status" value="1"/>
</dbReference>
<dbReference type="SUPFAM" id="SSF53383">
    <property type="entry name" value="PLP-dependent transferases"/>
    <property type="match status" value="1"/>
</dbReference>
<dbReference type="PROSITE" id="PS00392">
    <property type="entry name" value="DDC_GAD_HDC_YDC"/>
    <property type="match status" value="1"/>
</dbReference>
<keyword id="KW-0210">Decarboxylase</keyword>
<keyword id="KW-0456">Lyase</keyword>
<keyword id="KW-0663">Pyridoxal phosphate</keyword>
<reference key="1">
    <citation type="journal article" date="1991" name="J. Biol. Chem.">
        <title>Pyridoxal phosphate-dependent histidine decarboxylases. Cloning, sequencing, and expression of genes from Klebsiella planticola and Enterobacter aerogenes and properties of the overexpressed enzymes.</title>
        <authorList>
            <person name="Kamath A.V."/>
            <person name="Vaaler G.L."/>
            <person name="Snell E.E."/>
        </authorList>
    </citation>
    <scope>NUCLEOTIDE SEQUENCE [GENOMIC DNA]</scope>
</reference>
<organism>
    <name type="scientific">Klebsiella aerogenes</name>
    <name type="common">Enterobacter aerogenes</name>
    <dbReference type="NCBI Taxonomy" id="548"/>
    <lineage>
        <taxon>Bacteria</taxon>
        <taxon>Pseudomonadati</taxon>
        <taxon>Pseudomonadota</taxon>
        <taxon>Gammaproteobacteria</taxon>
        <taxon>Enterobacterales</taxon>
        <taxon>Enterobacteriaceae</taxon>
        <taxon>Klebsiella/Raoultella group</taxon>
        <taxon>Klebsiella</taxon>
    </lineage>
</organism>
<gene>
    <name type="primary">hdc</name>
</gene>
<comment type="catalytic activity">
    <reaction>
        <text>L-histidine + H(+) = histamine + CO2</text>
        <dbReference type="Rhea" id="RHEA:20840"/>
        <dbReference type="ChEBI" id="CHEBI:15378"/>
        <dbReference type="ChEBI" id="CHEBI:16526"/>
        <dbReference type="ChEBI" id="CHEBI:57595"/>
        <dbReference type="ChEBI" id="CHEBI:58432"/>
        <dbReference type="EC" id="4.1.1.22"/>
    </reaction>
</comment>
<comment type="cofactor">
    <cofactor>
        <name>pyridoxal 5'-phosphate</name>
        <dbReference type="ChEBI" id="CHEBI:597326"/>
    </cofactor>
</comment>
<comment type="subunit">
    <text evidence="1">Homotetramer.</text>
</comment>
<comment type="similarity">
    <text evidence="2">Belongs to the group II decarboxylase family.</text>
</comment>
<protein>
    <recommendedName>
        <fullName>Histidine decarboxylase</fullName>
        <shortName>HDC</shortName>
        <ecNumber>4.1.1.22</ecNumber>
    </recommendedName>
</protein>
<feature type="initiator methionine" description="Removed" evidence="1">
    <location>
        <position position="1"/>
    </location>
</feature>
<feature type="chain" id="PRO_0000146955" description="Histidine decarboxylase">
    <location>
        <begin position="2"/>
        <end position="378"/>
    </location>
</feature>
<feature type="binding site" evidence="1">
    <location>
        <position position="120"/>
    </location>
    <ligand>
        <name>substrate</name>
    </ligand>
</feature>
<feature type="modified residue" description="N6-(pyridoxal phosphate)lysine" evidence="1">
    <location>
        <position position="233"/>
    </location>
</feature>
<proteinExistence type="inferred from homology"/>
<name>DCHS_KLEAE</name>